<name>DER_STAAW</name>
<feature type="chain" id="PRO_0000179047" description="GTPase Der">
    <location>
        <begin position="1"/>
        <end position="436"/>
    </location>
</feature>
<feature type="domain" description="EngA-type G 1">
    <location>
        <begin position="4"/>
        <end position="167"/>
    </location>
</feature>
<feature type="domain" description="EngA-type G 2">
    <location>
        <begin position="176"/>
        <end position="351"/>
    </location>
</feature>
<feature type="domain" description="KH-like" evidence="1">
    <location>
        <begin position="352"/>
        <end position="436"/>
    </location>
</feature>
<feature type="binding site" evidence="1">
    <location>
        <begin position="10"/>
        <end position="17"/>
    </location>
    <ligand>
        <name>GTP</name>
        <dbReference type="ChEBI" id="CHEBI:37565"/>
        <label>1</label>
    </ligand>
</feature>
<feature type="binding site" evidence="1">
    <location>
        <begin position="57"/>
        <end position="61"/>
    </location>
    <ligand>
        <name>GTP</name>
        <dbReference type="ChEBI" id="CHEBI:37565"/>
        <label>1</label>
    </ligand>
</feature>
<feature type="binding site" evidence="1">
    <location>
        <begin position="119"/>
        <end position="122"/>
    </location>
    <ligand>
        <name>GTP</name>
        <dbReference type="ChEBI" id="CHEBI:37565"/>
        <label>1</label>
    </ligand>
</feature>
<feature type="binding site" evidence="1">
    <location>
        <begin position="182"/>
        <end position="189"/>
    </location>
    <ligand>
        <name>GTP</name>
        <dbReference type="ChEBI" id="CHEBI:37565"/>
        <label>2</label>
    </ligand>
</feature>
<feature type="binding site" evidence="1">
    <location>
        <begin position="229"/>
        <end position="233"/>
    </location>
    <ligand>
        <name>GTP</name>
        <dbReference type="ChEBI" id="CHEBI:37565"/>
        <label>2</label>
    </ligand>
</feature>
<feature type="binding site" evidence="1">
    <location>
        <begin position="294"/>
        <end position="297"/>
    </location>
    <ligand>
        <name>GTP</name>
        <dbReference type="ChEBI" id="CHEBI:37565"/>
        <label>2</label>
    </ligand>
</feature>
<dbReference type="EMBL" id="BA000033">
    <property type="protein sequence ID" value="BAB95229.1"/>
    <property type="molecule type" value="Genomic_DNA"/>
</dbReference>
<dbReference type="RefSeq" id="WP_000165530.1">
    <property type="nucleotide sequence ID" value="NC_003923.1"/>
</dbReference>
<dbReference type="SMR" id="P64061"/>
<dbReference type="KEGG" id="sam:MW1364"/>
<dbReference type="HOGENOM" id="CLU_016077_6_2_9"/>
<dbReference type="GO" id="GO:0005525">
    <property type="term" value="F:GTP binding"/>
    <property type="evidence" value="ECO:0007669"/>
    <property type="project" value="UniProtKB-UniRule"/>
</dbReference>
<dbReference type="GO" id="GO:0043022">
    <property type="term" value="F:ribosome binding"/>
    <property type="evidence" value="ECO:0007669"/>
    <property type="project" value="TreeGrafter"/>
</dbReference>
<dbReference type="GO" id="GO:0042254">
    <property type="term" value="P:ribosome biogenesis"/>
    <property type="evidence" value="ECO:0007669"/>
    <property type="project" value="UniProtKB-KW"/>
</dbReference>
<dbReference type="CDD" id="cd01894">
    <property type="entry name" value="EngA1"/>
    <property type="match status" value="1"/>
</dbReference>
<dbReference type="CDD" id="cd01895">
    <property type="entry name" value="EngA2"/>
    <property type="match status" value="1"/>
</dbReference>
<dbReference type="FunFam" id="3.30.300.20:FF:000004">
    <property type="entry name" value="GTPase Der"/>
    <property type="match status" value="1"/>
</dbReference>
<dbReference type="FunFam" id="3.40.50.300:FF:000040">
    <property type="entry name" value="GTPase Der"/>
    <property type="match status" value="1"/>
</dbReference>
<dbReference type="FunFam" id="3.40.50.300:FF:000057">
    <property type="entry name" value="GTPase Der"/>
    <property type="match status" value="1"/>
</dbReference>
<dbReference type="Gene3D" id="3.30.300.20">
    <property type="match status" value="1"/>
</dbReference>
<dbReference type="Gene3D" id="3.40.50.300">
    <property type="entry name" value="P-loop containing nucleotide triphosphate hydrolases"/>
    <property type="match status" value="2"/>
</dbReference>
<dbReference type="HAMAP" id="MF_00195">
    <property type="entry name" value="GTPase_Der"/>
    <property type="match status" value="1"/>
</dbReference>
<dbReference type="InterPro" id="IPR031166">
    <property type="entry name" value="G_ENGA"/>
</dbReference>
<dbReference type="InterPro" id="IPR006073">
    <property type="entry name" value="GTP-bd"/>
</dbReference>
<dbReference type="InterPro" id="IPR016484">
    <property type="entry name" value="GTPase_Der"/>
</dbReference>
<dbReference type="InterPro" id="IPR032859">
    <property type="entry name" value="KH_dom-like"/>
</dbReference>
<dbReference type="InterPro" id="IPR015946">
    <property type="entry name" value="KH_dom-like_a/b"/>
</dbReference>
<dbReference type="InterPro" id="IPR027417">
    <property type="entry name" value="P-loop_NTPase"/>
</dbReference>
<dbReference type="InterPro" id="IPR005225">
    <property type="entry name" value="Small_GTP-bd"/>
</dbReference>
<dbReference type="NCBIfam" id="TIGR03594">
    <property type="entry name" value="GTPase_EngA"/>
    <property type="match status" value="1"/>
</dbReference>
<dbReference type="NCBIfam" id="TIGR00231">
    <property type="entry name" value="small_GTP"/>
    <property type="match status" value="2"/>
</dbReference>
<dbReference type="PANTHER" id="PTHR43834">
    <property type="entry name" value="GTPASE DER"/>
    <property type="match status" value="1"/>
</dbReference>
<dbReference type="PANTHER" id="PTHR43834:SF6">
    <property type="entry name" value="GTPASE DER"/>
    <property type="match status" value="1"/>
</dbReference>
<dbReference type="Pfam" id="PF14714">
    <property type="entry name" value="KH_dom-like"/>
    <property type="match status" value="1"/>
</dbReference>
<dbReference type="Pfam" id="PF01926">
    <property type="entry name" value="MMR_HSR1"/>
    <property type="match status" value="2"/>
</dbReference>
<dbReference type="PIRSF" id="PIRSF006485">
    <property type="entry name" value="GTP-binding_EngA"/>
    <property type="match status" value="1"/>
</dbReference>
<dbReference type="PRINTS" id="PR00326">
    <property type="entry name" value="GTP1OBG"/>
</dbReference>
<dbReference type="SUPFAM" id="SSF52540">
    <property type="entry name" value="P-loop containing nucleoside triphosphate hydrolases"/>
    <property type="match status" value="2"/>
</dbReference>
<dbReference type="PROSITE" id="PS51712">
    <property type="entry name" value="G_ENGA"/>
    <property type="match status" value="2"/>
</dbReference>
<organism>
    <name type="scientific">Staphylococcus aureus (strain MW2)</name>
    <dbReference type="NCBI Taxonomy" id="196620"/>
    <lineage>
        <taxon>Bacteria</taxon>
        <taxon>Bacillati</taxon>
        <taxon>Bacillota</taxon>
        <taxon>Bacilli</taxon>
        <taxon>Bacillales</taxon>
        <taxon>Staphylococcaceae</taxon>
        <taxon>Staphylococcus</taxon>
    </lineage>
</organism>
<proteinExistence type="inferred from homology"/>
<reference key="1">
    <citation type="journal article" date="2002" name="Lancet">
        <title>Genome and virulence determinants of high virulence community-acquired MRSA.</title>
        <authorList>
            <person name="Baba T."/>
            <person name="Takeuchi F."/>
            <person name="Kuroda M."/>
            <person name="Yuzawa H."/>
            <person name="Aoki K."/>
            <person name="Oguchi A."/>
            <person name="Nagai Y."/>
            <person name="Iwama N."/>
            <person name="Asano K."/>
            <person name="Naimi T."/>
            <person name="Kuroda H."/>
            <person name="Cui L."/>
            <person name="Yamamoto K."/>
            <person name="Hiramatsu K."/>
        </authorList>
    </citation>
    <scope>NUCLEOTIDE SEQUENCE [LARGE SCALE GENOMIC DNA]</scope>
    <source>
        <strain>MW2</strain>
    </source>
</reference>
<comment type="function">
    <text evidence="1">GTPase that plays an essential role in the late steps of ribosome biogenesis.</text>
</comment>
<comment type="subunit">
    <text evidence="1">Associates with the 50S ribosomal subunit.</text>
</comment>
<comment type="similarity">
    <text evidence="1">Belongs to the TRAFAC class TrmE-Era-EngA-EngB-Septin-like GTPase superfamily. EngA (Der) GTPase family.</text>
</comment>
<accession>P64061</accession>
<accession>Q99U15</accession>
<protein>
    <recommendedName>
        <fullName evidence="1">GTPase Der</fullName>
    </recommendedName>
    <alternativeName>
        <fullName evidence="1">GTP-binding protein EngA</fullName>
    </alternativeName>
</protein>
<sequence length="436" mass="48980">MTKPIVAIVGRPNVGKSTIFNRIVGERVSIVEDTPGVTRDRIYSSGEWLTHDFNIIDTGGIEIGDAPFQTQIRAQAEIAIDEADVIIFMVNVREGLTQSDEMVAQILYKSKKPVVLAVNKVDNMEMRTDVYDFYSLGFGEPYPISGSHGLGLGDLLDAVVSHFGEEEEDPYDEDTIRLSIIGRPNVGKSSLVNAILGEDRVIVSNVAGTTRDAIDTEYSYDGQDYVLIDTAGMRKKGKVYESTEKYSVLRALKAIERSNVVLVVIDAEQGIIEQDKRVAGYAHEQGKAVVIVVNKWDTVEKDSKTMKKFEDEVRKEFQFLDYAQIAFVSAKERTRLRTLFPYINEASENHKKRVQSSTLNEVVTDAISMNPTPTDKGRRLNVFYATQVAIEPPTFVVFVNDVELMHFSYKRYLENQIRAAFGFEGTPIHIIARKRN</sequence>
<keyword id="KW-0342">GTP-binding</keyword>
<keyword id="KW-0547">Nucleotide-binding</keyword>
<keyword id="KW-0677">Repeat</keyword>
<keyword id="KW-0690">Ribosome biogenesis</keyword>
<gene>
    <name evidence="1" type="primary">der</name>
    <name type="synonym">engA</name>
    <name type="ordered locus">MW1364</name>
</gene>
<evidence type="ECO:0000255" key="1">
    <source>
        <dbReference type="HAMAP-Rule" id="MF_00195"/>
    </source>
</evidence>